<protein>
    <recommendedName>
        <fullName evidence="2">Cytochrome b6-f complex subunit 4</fullName>
    </recommendedName>
    <alternativeName>
        <fullName evidence="2">17 kDa polypeptide</fullName>
    </alternativeName>
</protein>
<organism>
    <name type="scientific">Emiliania huxleyi</name>
    <name type="common">Coccolithophore</name>
    <name type="synonym">Pontosphaera huxleyi</name>
    <dbReference type="NCBI Taxonomy" id="2903"/>
    <lineage>
        <taxon>Eukaryota</taxon>
        <taxon>Haptista</taxon>
        <taxon>Haptophyta</taxon>
        <taxon>Prymnesiophyceae</taxon>
        <taxon>Isochrysidales</taxon>
        <taxon>Noelaerhabdaceae</taxon>
        <taxon>Emiliania</taxon>
    </lineage>
</organism>
<reference key="1">
    <citation type="journal article" date="2006" name="J. Mol. Evol.">
        <title>Rate variation as a function of gene origin in plastid-derived genes of peridinin-containing dinoflagellates.</title>
        <authorList>
            <person name="Bachvaroff T.R."/>
            <person name="Sanchez-Puerta M.V."/>
            <person name="Delwiche C.F."/>
        </authorList>
    </citation>
    <scope>NUCLEOTIDE SEQUENCE [GENOMIC DNA]</scope>
    <source>
        <strain>CCMP373 / CSIRO-CS-57 / BT6</strain>
    </source>
</reference>
<reference key="2">
    <citation type="journal article" date="2005" name="DNA Res.">
        <title>The complete plastid genome sequence of the haptophyte Emiliania huxleyi: a comparison to other plastid genomes.</title>
        <authorList>
            <person name="Sanchez-Puerta M.V."/>
            <person name="Bachvaroff T.R."/>
            <person name="Delwiche C.F."/>
        </authorList>
    </citation>
    <scope>NUCLEOTIDE SEQUENCE [LARGE SCALE GENOMIC DNA]</scope>
    <source>
        <strain>CCMP373 / CSIRO-CS-57 / BT6</strain>
    </source>
</reference>
<gene>
    <name evidence="2" type="primary">petD</name>
</gene>
<keyword id="KW-0150">Chloroplast</keyword>
<keyword id="KW-0249">Electron transport</keyword>
<keyword id="KW-0472">Membrane</keyword>
<keyword id="KW-0602">Photosynthesis</keyword>
<keyword id="KW-0934">Plastid</keyword>
<keyword id="KW-0793">Thylakoid</keyword>
<keyword id="KW-0812">Transmembrane</keyword>
<keyword id="KW-1133">Transmembrane helix</keyword>
<keyword id="KW-0813">Transport</keyword>
<dbReference type="EMBL" id="AY675519">
    <property type="protein sequence ID" value="AAU81901.1"/>
    <property type="molecule type" value="Genomic_DNA"/>
</dbReference>
<dbReference type="EMBL" id="AY741371">
    <property type="protein sequence ID" value="AAX13809.1"/>
    <property type="molecule type" value="Genomic_DNA"/>
</dbReference>
<dbReference type="RefSeq" id="YP_277310.1">
    <property type="nucleotide sequence ID" value="NC_007288.1"/>
</dbReference>
<dbReference type="SMR" id="Q4G3F7"/>
<dbReference type="STRING" id="2903.Q4G3F7"/>
<dbReference type="GeneID" id="3562544"/>
<dbReference type="GO" id="GO:0009535">
    <property type="term" value="C:chloroplast thylakoid membrane"/>
    <property type="evidence" value="ECO:0007669"/>
    <property type="project" value="UniProtKB-SubCell"/>
</dbReference>
<dbReference type="GO" id="GO:0045158">
    <property type="term" value="F:electron transporter, transferring electrons within cytochrome b6/f complex of photosystem II activity"/>
    <property type="evidence" value="ECO:0007669"/>
    <property type="project" value="UniProtKB-UniRule"/>
</dbReference>
<dbReference type="GO" id="GO:0045156">
    <property type="term" value="F:electron transporter, transferring electrons within the cyclic electron transport pathway of photosynthesis activity"/>
    <property type="evidence" value="ECO:0007669"/>
    <property type="project" value="InterPro"/>
</dbReference>
<dbReference type="GO" id="GO:0016491">
    <property type="term" value="F:oxidoreductase activity"/>
    <property type="evidence" value="ECO:0007669"/>
    <property type="project" value="InterPro"/>
</dbReference>
<dbReference type="GO" id="GO:0009767">
    <property type="term" value="P:photosynthetic electron transport chain"/>
    <property type="evidence" value="ECO:0007669"/>
    <property type="project" value="InterPro"/>
</dbReference>
<dbReference type="CDD" id="cd00290">
    <property type="entry name" value="cytochrome_b_C"/>
    <property type="match status" value="1"/>
</dbReference>
<dbReference type="FunFam" id="1.10.287.980:FF:000001">
    <property type="entry name" value="Cytochrome b6-f complex subunit 4"/>
    <property type="match status" value="1"/>
</dbReference>
<dbReference type="FunFam" id="1.20.5.510:FF:000002">
    <property type="entry name" value="Cytochrome b6-f complex subunit 4"/>
    <property type="match status" value="1"/>
</dbReference>
<dbReference type="Gene3D" id="1.10.287.980">
    <property type="entry name" value="plastocyanin oxidoreductase"/>
    <property type="match status" value="1"/>
</dbReference>
<dbReference type="Gene3D" id="1.20.5.510">
    <property type="entry name" value="Single helix bin"/>
    <property type="match status" value="1"/>
</dbReference>
<dbReference type="HAMAP" id="MF_01344">
    <property type="entry name" value="Cytb6_f_subIV"/>
    <property type="match status" value="1"/>
</dbReference>
<dbReference type="InterPro" id="IPR005798">
    <property type="entry name" value="Cyt_b/b6_C"/>
</dbReference>
<dbReference type="InterPro" id="IPR036150">
    <property type="entry name" value="Cyt_b/b6_C_sf"/>
</dbReference>
<dbReference type="InterPro" id="IPR005870">
    <property type="entry name" value="Cyt_b6/f_cplx_suIV"/>
</dbReference>
<dbReference type="InterPro" id="IPR048260">
    <property type="entry name" value="Cytochrome_b_C_euk/bac"/>
</dbReference>
<dbReference type="NCBIfam" id="TIGR01156">
    <property type="entry name" value="cytb6_f_IV"/>
    <property type="match status" value="1"/>
</dbReference>
<dbReference type="PANTHER" id="PTHR19271">
    <property type="entry name" value="CYTOCHROME B"/>
    <property type="match status" value="1"/>
</dbReference>
<dbReference type="PANTHER" id="PTHR19271:SF40">
    <property type="entry name" value="CYTOCHROME B"/>
    <property type="match status" value="1"/>
</dbReference>
<dbReference type="Pfam" id="PF00032">
    <property type="entry name" value="Cytochrom_B_C"/>
    <property type="match status" value="1"/>
</dbReference>
<dbReference type="PIRSF" id="PIRSF000033">
    <property type="entry name" value="B6f_17K"/>
    <property type="match status" value="1"/>
</dbReference>
<dbReference type="SUPFAM" id="SSF81648">
    <property type="entry name" value="a domain/subunit of cytochrome bc1 complex (Ubiquinol-cytochrome c reductase)"/>
    <property type="match status" value="1"/>
</dbReference>
<dbReference type="PROSITE" id="PS51003">
    <property type="entry name" value="CYTB_CTER"/>
    <property type="match status" value="1"/>
</dbReference>
<comment type="function">
    <text evidence="2">Component of the cytochrome b6-f complex, which mediates electron transfer between photosystem II (PSII) and photosystem I (PSI), cyclic electron flow around PSI, and state transitions.</text>
</comment>
<comment type="subunit">
    <text evidence="1">The 4 large subunits of the cytochrome b6-f complex are cytochrome b6, subunit IV (17 kDa polypeptide, petD), cytochrome f and the Rieske protein, while the 4 small subunits are petG, petL, petM and petN. The complex functions as a dimer (By similarity).</text>
</comment>
<comment type="subcellular location">
    <subcellularLocation>
        <location evidence="2">Plastid</location>
        <location evidence="2">Chloroplast thylakoid membrane</location>
        <topology evidence="2">Multi-pass membrane protein</topology>
    </subcellularLocation>
</comment>
<comment type="similarity">
    <text evidence="2">Belongs to the cytochrome b family. PetD subfamily.</text>
</comment>
<sequence>MSILKKPDLADPKLRAKLAKGMGHNYYGEPAWPNDLLYIFPVCILGTIACCIGLGVLEPTPLGEKADPFATPLEILPEWYFFPTFNLLRVIPNKLLGVLSMAAVPIGLITVPFIENVNKFQNPFRRPVASLVFLFGTFTAFWLGIGATMPITQALTLGFF</sequence>
<name>PETD_EMIHU</name>
<proteinExistence type="inferred from homology"/>
<evidence type="ECO:0000250" key="1"/>
<evidence type="ECO:0000255" key="2">
    <source>
        <dbReference type="HAMAP-Rule" id="MF_01344"/>
    </source>
</evidence>
<accession>Q4G3F7</accession>
<geneLocation type="chloroplast"/>
<feature type="chain" id="PRO_0000061859" description="Cytochrome b6-f complex subunit 4">
    <location>
        <begin position="1"/>
        <end position="160"/>
    </location>
</feature>
<feature type="transmembrane region" description="Helical" evidence="2">
    <location>
        <begin position="36"/>
        <end position="56"/>
    </location>
</feature>
<feature type="transmembrane region" description="Helical" evidence="2">
    <location>
        <begin position="95"/>
        <end position="115"/>
    </location>
</feature>
<feature type="transmembrane region" description="Helical" evidence="2">
    <location>
        <begin position="131"/>
        <end position="151"/>
    </location>
</feature>